<keyword id="KW-0963">Cytoplasm</keyword>
<keyword id="KW-0396">Initiation factor</keyword>
<keyword id="KW-0648">Protein biosynthesis</keyword>
<keyword id="KW-1185">Reference proteome</keyword>
<proteinExistence type="inferred from homology"/>
<dbReference type="EMBL" id="CM001233">
    <property type="protein sequence ID" value="EHA52990.1"/>
    <property type="molecule type" value="Genomic_DNA"/>
</dbReference>
<dbReference type="RefSeq" id="XP_003712797.1">
    <property type="nucleotide sequence ID" value="XM_003712749.1"/>
</dbReference>
<dbReference type="SMR" id="A4QSX4"/>
<dbReference type="FunCoup" id="A4QSX4">
    <property type="interactions" value="1152"/>
</dbReference>
<dbReference type="STRING" id="242507.A4QSX4"/>
<dbReference type="EnsemblFungi" id="MGG_16895T0">
    <property type="protein sequence ID" value="MGG_16895T0"/>
    <property type="gene ID" value="MGG_16895"/>
</dbReference>
<dbReference type="KEGG" id="mgr:MGG_16895"/>
<dbReference type="VEuPathDB" id="FungiDB:MGG_16895"/>
<dbReference type="eggNOG" id="KOG1076">
    <property type="taxonomic scope" value="Eukaryota"/>
</dbReference>
<dbReference type="HOGENOM" id="CLU_004304_0_2_1"/>
<dbReference type="InParanoid" id="A4QSX4"/>
<dbReference type="OMA" id="FRCGLIK"/>
<dbReference type="OrthoDB" id="29647at2759"/>
<dbReference type="Proteomes" id="UP000009058">
    <property type="component" value="Chromosome 3"/>
</dbReference>
<dbReference type="GO" id="GO:0016282">
    <property type="term" value="C:eukaryotic 43S preinitiation complex"/>
    <property type="evidence" value="ECO:0007669"/>
    <property type="project" value="UniProtKB-UniRule"/>
</dbReference>
<dbReference type="GO" id="GO:0033290">
    <property type="term" value="C:eukaryotic 48S preinitiation complex"/>
    <property type="evidence" value="ECO:0007669"/>
    <property type="project" value="UniProtKB-UniRule"/>
</dbReference>
<dbReference type="GO" id="GO:0071540">
    <property type="term" value="C:eukaryotic translation initiation factor 3 complex, eIF3e"/>
    <property type="evidence" value="ECO:0007669"/>
    <property type="project" value="EnsemblFungi"/>
</dbReference>
<dbReference type="GO" id="GO:0071541">
    <property type="term" value="C:eukaryotic translation initiation factor 3 complex, eIF3m"/>
    <property type="evidence" value="ECO:0007669"/>
    <property type="project" value="EnsemblFungi"/>
</dbReference>
<dbReference type="GO" id="GO:0003723">
    <property type="term" value="F:RNA binding"/>
    <property type="evidence" value="ECO:0007669"/>
    <property type="project" value="InterPro"/>
</dbReference>
<dbReference type="GO" id="GO:0003743">
    <property type="term" value="F:translation initiation factor activity"/>
    <property type="evidence" value="ECO:0007669"/>
    <property type="project" value="UniProtKB-UniRule"/>
</dbReference>
<dbReference type="GO" id="GO:0031369">
    <property type="term" value="F:translation initiation factor binding"/>
    <property type="evidence" value="ECO:0007669"/>
    <property type="project" value="InterPro"/>
</dbReference>
<dbReference type="GO" id="GO:0001732">
    <property type="term" value="P:formation of cytoplasmic translation initiation complex"/>
    <property type="evidence" value="ECO:0007669"/>
    <property type="project" value="UniProtKB-UniRule"/>
</dbReference>
<dbReference type="FunFam" id="1.10.10.10:FF:000300">
    <property type="entry name" value="Eukaryotic translation initiation factor 3 subunit C"/>
    <property type="match status" value="1"/>
</dbReference>
<dbReference type="Gene3D" id="1.10.10.10">
    <property type="entry name" value="Winged helix-like DNA-binding domain superfamily/Winged helix DNA-binding domain"/>
    <property type="match status" value="1"/>
</dbReference>
<dbReference type="HAMAP" id="MF_03002">
    <property type="entry name" value="eIF3c"/>
    <property type="match status" value="1"/>
</dbReference>
<dbReference type="InterPro" id="IPR027516">
    <property type="entry name" value="EIF3C"/>
</dbReference>
<dbReference type="InterPro" id="IPR008905">
    <property type="entry name" value="EIF3C_N_dom"/>
</dbReference>
<dbReference type="InterPro" id="IPR000717">
    <property type="entry name" value="PCI_dom"/>
</dbReference>
<dbReference type="InterPro" id="IPR036388">
    <property type="entry name" value="WH-like_DNA-bd_sf"/>
</dbReference>
<dbReference type="InterPro" id="IPR036390">
    <property type="entry name" value="WH_DNA-bd_sf"/>
</dbReference>
<dbReference type="PANTHER" id="PTHR13937">
    <property type="entry name" value="EUKARYOTIC TRANSLATION INITATION FACTOR 3, SUBUNIT 8 EIF3S8 -RELATED"/>
    <property type="match status" value="1"/>
</dbReference>
<dbReference type="PANTHER" id="PTHR13937:SF0">
    <property type="entry name" value="EUKARYOTIC TRANSLATION INITIATION FACTOR 3 SUBUNIT C-RELATED"/>
    <property type="match status" value="1"/>
</dbReference>
<dbReference type="Pfam" id="PF05470">
    <property type="entry name" value="eIF-3c_N"/>
    <property type="match status" value="1"/>
</dbReference>
<dbReference type="Pfam" id="PF01399">
    <property type="entry name" value="PCI"/>
    <property type="match status" value="1"/>
</dbReference>
<dbReference type="SMART" id="SM00088">
    <property type="entry name" value="PINT"/>
    <property type="match status" value="1"/>
</dbReference>
<dbReference type="SUPFAM" id="SSF46785">
    <property type="entry name" value="Winged helix' DNA-binding domain"/>
    <property type="match status" value="1"/>
</dbReference>
<dbReference type="PROSITE" id="PS50250">
    <property type="entry name" value="PCI"/>
    <property type="match status" value="1"/>
</dbReference>
<feature type="chain" id="PRO_0000364285" description="Eukaryotic translation initiation factor 3 subunit C">
    <location>
        <begin position="1"/>
        <end position="865"/>
    </location>
</feature>
<feature type="domain" description="PCI" evidence="2">
    <location>
        <begin position="606"/>
        <end position="780"/>
    </location>
</feature>
<feature type="region of interest" description="Disordered" evidence="3">
    <location>
        <begin position="1"/>
        <end position="92"/>
    </location>
</feature>
<feature type="region of interest" description="Disordered" evidence="3">
    <location>
        <begin position="206"/>
        <end position="243"/>
    </location>
</feature>
<feature type="region of interest" description="Disordered" evidence="3">
    <location>
        <begin position="801"/>
        <end position="865"/>
    </location>
</feature>
<feature type="compositionally biased region" description="Acidic residues" evidence="3">
    <location>
        <begin position="16"/>
        <end position="54"/>
    </location>
</feature>
<feature type="compositionally biased region" description="Acidic residues" evidence="3">
    <location>
        <begin position="69"/>
        <end position="80"/>
    </location>
</feature>
<feature type="compositionally biased region" description="Basic and acidic residues" evidence="3">
    <location>
        <begin position="82"/>
        <end position="92"/>
    </location>
</feature>
<feature type="compositionally biased region" description="Acidic residues" evidence="3">
    <location>
        <begin position="226"/>
        <end position="235"/>
    </location>
</feature>
<feature type="compositionally biased region" description="Polar residues" evidence="3">
    <location>
        <begin position="808"/>
        <end position="817"/>
    </location>
</feature>
<feature type="compositionally biased region" description="Gly residues" evidence="3">
    <location>
        <begin position="822"/>
        <end position="841"/>
    </location>
</feature>
<evidence type="ECO:0000255" key="1">
    <source>
        <dbReference type="HAMAP-Rule" id="MF_03002"/>
    </source>
</evidence>
<evidence type="ECO:0000255" key="2">
    <source>
        <dbReference type="PROSITE-ProRule" id="PRU01185"/>
    </source>
</evidence>
<evidence type="ECO:0000256" key="3">
    <source>
        <dbReference type="SAM" id="MobiDB-lite"/>
    </source>
</evidence>
<protein>
    <recommendedName>
        <fullName evidence="1">Eukaryotic translation initiation factor 3 subunit C</fullName>
        <shortName evidence="1">eIF3c</shortName>
    </recommendedName>
    <alternativeName>
        <fullName evidence="1">Eukaryotic translation initiation factor 3 93 kDa subunit homolog</fullName>
        <shortName evidence="1">eIF3 p93</shortName>
    </alternativeName>
    <alternativeName>
        <fullName evidence="1">Translation initiation factor eIF3, p93 subunit homolog</fullName>
    </alternativeName>
</protein>
<sequence length="865" mass="97070">MSRFFRGGNESSSESSSDEEELYSEEEEEELEDEGDDSDNDGSGDDDSDSDSDADAGGKKKGAAKFLVDDDSSDEEDSDAEVTTKVKSAKDKRLDELESTVTAIANGMKINDWGSIATEFDKLNRQAEKLRTGTTAPKMYIKSIADLEDFMNETLAKQKVTPKKMNATNARGLNAVKQRIKKNNKEYQAQIDAYKADEFEFMMDTEDEEEPAPKPKKAAKVSFDEATAEDEEDDEGFARVGKGGKTLQFTPESIFKHLRSILESRGKKNTDRGEQIKIMEKLGEIAQTPYQRIRVLLALVSSRFDIGTSAGAALSVEHWKAAEKELSLLLTVLDENKDHIVLESAEEWDDDEKPPTLEKGEKYIKIPGSIVSYTERLDDELTRSLQAIDPHTSEYIDRLSDEGALYNIIFRAQLYYEGLRKDASLEIPQESLNRAIMRRLDHVYFKPAQVIKILEENSWKAVGDKASNITPREQTVEAAQLVNVLCNYLFANSEGIHRARAMLCQIYFLALHDDYYKSRDMMLMSHLQETISSFDVLTQILYNRTLVQVGLCAFRKGLVYDAQNTLQDICGSGRQKELLAQGVMIQRFNQVSPEQERLERQRQLPFHMHINLELLECVYLTCSMLLEIPLLAQTGSSPDIKKRIISKTYRRMLEYHERQIFTGPPENTRDHVMQASKALAAGEWKKATSFIHSIKIWELMPNADAIKTMLAKQIQEEGLRTYLFTYAPFYDTLSIETLSNMFELESTKISAVVSKMISHEELAAALDQVKQTVIFRKGVELSRLQSLALTLSDKASSLIESNERTLEQRTQGTSNAFERQGGRGGRGGGRGRGGGRGGPRFGGNTQRQAGGTQFTGGALGAAVRA</sequence>
<accession>A4QSX4</accession>
<accession>G4N5D3</accession>
<comment type="function">
    <text evidence="1">Component of the eukaryotic translation initiation factor 3 (eIF-3) complex, which is involved in protein synthesis of a specialized repertoire of mRNAs and, together with other initiation factors, stimulates binding of mRNA and methionyl-tRNAi to the 40S ribosome. The eIF-3 complex specifically targets and initiates translation of a subset of mRNAs involved in cell proliferation.</text>
</comment>
<comment type="subunit">
    <text evidence="1">Component of the eukaryotic translation initiation factor 3 (eIF-3) complex.</text>
</comment>
<comment type="subcellular location">
    <subcellularLocation>
        <location evidence="1">Cytoplasm</location>
    </subcellularLocation>
</comment>
<comment type="similarity">
    <text evidence="1">Belongs to the eIF-3 subunit C family.</text>
</comment>
<organism>
    <name type="scientific">Pyricularia oryzae (strain 70-15 / ATCC MYA-4617 / FGSC 8958)</name>
    <name type="common">Rice blast fungus</name>
    <name type="synonym">Magnaporthe oryzae</name>
    <dbReference type="NCBI Taxonomy" id="242507"/>
    <lineage>
        <taxon>Eukaryota</taxon>
        <taxon>Fungi</taxon>
        <taxon>Dikarya</taxon>
        <taxon>Ascomycota</taxon>
        <taxon>Pezizomycotina</taxon>
        <taxon>Sordariomycetes</taxon>
        <taxon>Sordariomycetidae</taxon>
        <taxon>Magnaporthales</taxon>
        <taxon>Pyriculariaceae</taxon>
        <taxon>Pyricularia</taxon>
    </lineage>
</organism>
<name>EIF3C_PYRO7</name>
<reference key="1">
    <citation type="journal article" date="2005" name="Nature">
        <title>The genome sequence of the rice blast fungus Magnaporthe grisea.</title>
        <authorList>
            <person name="Dean R.A."/>
            <person name="Talbot N.J."/>
            <person name="Ebbole D.J."/>
            <person name="Farman M.L."/>
            <person name="Mitchell T.K."/>
            <person name="Orbach M.J."/>
            <person name="Thon M.R."/>
            <person name="Kulkarni R."/>
            <person name="Xu J.-R."/>
            <person name="Pan H."/>
            <person name="Read N.D."/>
            <person name="Lee Y.-H."/>
            <person name="Carbone I."/>
            <person name="Brown D."/>
            <person name="Oh Y.Y."/>
            <person name="Donofrio N."/>
            <person name="Jeong J.S."/>
            <person name="Soanes D.M."/>
            <person name="Djonovic S."/>
            <person name="Kolomiets E."/>
            <person name="Rehmeyer C."/>
            <person name="Li W."/>
            <person name="Harding M."/>
            <person name="Kim S."/>
            <person name="Lebrun M.-H."/>
            <person name="Bohnert H."/>
            <person name="Coughlan S."/>
            <person name="Butler J."/>
            <person name="Calvo S.E."/>
            <person name="Ma L.-J."/>
            <person name="Nicol R."/>
            <person name="Purcell S."/>
            <person name="Nusbaum C."/>
            <person name="Galagan J.E."/>
            <person name="Birren B.W."/>
        </authorList>
    </citation>
    <scope>NUCLEOTIDE SEQUENCE [LARGE SCALE GENOMIC DNA]</scope>
    <source>
        <strain>70-15 / ATCC MYA-4617 / FGSC 8958</strain>
    </source>
</reference>
<gene>
    <name evidence="1" type="primary">NIP1</name>
    <name type="ORF">MGG_05243</name>
</gene>